<organism>
    <name type="scientific">Homo sapiens</name>
    <name type="common">Human</name>
    <dbReference type="NCBI Taxonomy" id="9606"/>
    <lineage>
        <taxon>Eukaryota</taxon>
        <taxon>Metazoa</taxon>
        <taxon>Chordata</taxon>
        <taxon>Craniata</taxon>
        <taxon>Vertebrata</taxon>
        <taxon>Euteleostomi</taxon>
        <taxon>Mammalia</taxon>
        <taxon>Eutheria</taxon>
        <taxon>Euarchontoglires</taxon>
        <taxon>Primates</taxon>
        <taxon>Haplorrhini</taxon>
        <taxon>Catarrhini</taxon>
        <taxon>Hominidae</taxon>
        <taxon>Homo</taxon>
    </lineage>
</organism>
<keyword id="KW-1003">Cell membrane</keyword>
<keyword id="KW-1015">Disulfide bond</keyword>
<keyword id="KW-0297">G-protein coupled receptor</keyword>
<keyword id="KW-0325">Glycoprotein</keyword>
<keyword id="KW-0472">Membrane</keyword>
<keyword id="KW-0552">Olfaction</keyword>
<keyword id="KW-0675">Receptor</keyword>
<keyword id="KW-1185">Reference proteome</keyword>
<keyword id="KW-0716">Sensory transduction</keyword>
<keyword id="KW-0807">Transducer</keyword>
<keyword id="KW-0812">Transmembrane</keyword>
<keyword id="KW-1133">Transmembrane helix</keyword>
<gene>
    <name type="primary">OR2AG1</name>
    <name type="synonym">OR2AG3</name>
</gene>
<feature type="chain" id="PRO_0000150472" description="Olfactory receptor 2AG1">
    <location>
        <begin position="1"/>
        <end position="316"/>
    </location>
</feature>
<feature type="topological domain" description="Extracellular" evidence="1">
    <location>
        <begin position="1"/>
        <end position="25"/>
    </location>
</feature>
<feature type="transmembrane region" description="Helical; Name=1" evidence="1">
    <location>
        <begin position="26"/>
        <end position="49"/>
    </location>
</feature>
<feature type="topological domain" description="Cytoplasmic" evidence="1">
    <location>
        <begin position="50"/>
        <end position="57"/>
    </location>
</feature>
<feature type="transmembrane region" description="Helical; Name=2" evidence="1">
    <location>
        <begin position="58"/>
        <end position="79"/>
    </location>
</feature>
<feature type="topological domain" description="Extracellular" evidence="1">
    <location>
        <begin position="80"/>
        <end position="100"/>
    </location>
</feature>
<feature type="transmembrane region" description="Helical; Name=3" evidence="1">
    <location>
        <begin position="101"/>
        <end position="120"/>
    </location>
</feature>
<feature type="topological domain" description="Cytoplasmic" evidence="1">
    <location>
        <begin position="121"/>
        <end position="139"/>
    </location>
</feature>
<feature type="transmembrane region" description="Helical; Name=4" evidence="1">
    <location>
        <begin position="140"/>
        <end position="158"/>
    </location>
</feature>
<feature type="topological domain" description="Extracellular" evidence="1">
    <location>
        <begin position="159"/>
        <end position="195"/>
    </location>
</feature>
<feature type="transmembrane region" description="Helical; Name=5" evidence="1">
    <location>
        <begin position="196"/>
        <end position="219"/>
    </location>
</feature>
<feature type="topological domain" description="Cytoplasmic" evidence="1">
    <location>
        <begin position="220"/>
        <end position="236"/>
    </location>
</feature>
<feature type="transmembrane region" description="Helical; Name=6" evidence="1">
    <location>
        <begin position="237"/>
        <end position="259"/>
    </location>
</feature>
<feature type="topological domain" description="Extracellular" evidence="1">
    <location>
        <begin position="260"/>
        <end position="272"/>
    </location>
</feature>
<feature type="transmembrane region" description="Helical; Name=7" evidence="1">
    <location>
        <begin position="273"/>
        <end position="292"/>
    </location>
</feature>
<feature type="topological domain" description="Cytoplasmic" evidence="1">
    <location>
        <begin position="293"/>
        <end position="316"/>
    </location>
</feature>
<feature type="glycosylation site" description="N-linked (GlcNAc...) asparagine" evidence="1">
    <location>
        <position position="5"/>
    </location>
</feature>
<feature type="glycosylation site" description="N-linked (GlcNAc...) asparagine" evidence="1">
    <location>
        <position position="19"/>
    </location>
</feature>
<feature type="disulfide bond" evidence="2">
    <location>
        <begin position="97"/>
        <end position="189"/>
    </location>
</feature>
<feature type="sequence variant" id="VAR_053140" description="In dbSNP:rs2659880." evidence="3">
    <original>V</original>
    <variation>L</variation>
    <location>
        <position position="187"/>
    </location>
</feature>
<feature type="sequence variant" id="VAR_059985" description="In dbSNP:rs2659879." evidence="3">
    <original>R</original>
    <variation>G</variation>
    <location>
        <position position="299"/>
    </location>
</feature>
<feature type="sequence variant" id="VAR_059986" description="In dbSNP:rs2659879.">
    <original>R</original>
    <variation>W</variation>
    <location>
        <position position="299"/>
    </location>
</feature>
<evidence type="ECO:0000255" key="1"/>
<evidence type="ECO:0000255" key="2">
    <source>
        <dbReference type="PROSITE-ProRule" id="PRU00521"/>
    </source>
</evidence>
<evidence type="ECO:0000269" key="3">
    <source>
    </source>
</evidence>
<evidence type="ECO:0000305" key="4"/>
<proteinExistence type="evidence at protein level"/>
<dbReference type="EMBL" id="AB065823">
    <property type="protein sequence ID" value="BAC06042.1"/>
    <property type="molecule type" value="Genomic_DNA"/>
</dbReference>
<dbReference type="EMBL" id="CH471064">
    <property type="protein sequence ID" value="EAW68677.1"/>
    <property type="molecule type" value="Genomic_DNA"/>
</dbReference>
<dbReference type="EMBL" id="BC151143">
    <property type="protein sequence ID" value="AAI51144.1"/>
    <property type="molecule type" value="mRNA"/>
</dbReference>
<dbReference type="EMBL" id="AF399618">
    <property type="protein sequence ID" value="AAK95103.1"/>
    <property type="molecule type" value="Genomic_DNA"/>
</dbReference>
<dbReference type="EMBL" id="AF321237">
    <property type="protein sequence ID" value="AAG45209.1"/>
    <property type="molecule type" value="Genomic_DNA"/>
</dbReference>
<dbReference type="EMBL" id="BK004295">
    <property type="protein sequence ID" value="DAA04693.1"/>
    <property type="molecule type" value="Genomic_DNA"/>
</dbReference>
<dbReference type="CCDS" id="CCDS31414.1"/>
<dbReference type="RefSeq" id="NP_001004489.1">
    <property type="nucleotide sequence ID" value="NM_001004489.3"/>
</dbReference>
<dbReference type="SMR" id="Q9H205"/>
<dbReference type="FunCoup" id="Q9H205">
    <property type="interactions" value="444"/>
</dbReference>
<dbReference type="IntAct" id="Q9H205">
    <property type="interactions" value="1"/>
</dbReference>
<dbReference type="MINT" id="Q9H205"/>
<dbReference type="STRING" id="9606.ENSP00000493074"/>
<dbReference type="TCDB" id="9.A.14.8.2">
    <property type="family name" value="the g-protein-coupled receptor (gpcr) family"/>
</dbReference>
<dbReference type="GlyCosmos" id="Q9H205">
    <property type="glycosylation" value="2 sites, No reported glycans"/>
</dbReference>
<dbReference type="GlyGen" id="Q9H205">
    <property type="glycosylation" value="3 sites"/>
</dbReference>
<dbReference type="BioMuta" id="OR2AG1"/>
<dbReference type="DMDM" id="14423804"/>
<dbReference type="MassIVE" id="Q9H205"/>
<dbReference type="PaxDb" id="9606-ENSP00000485326"/>
<dbReference type="PeptideAtlas" id="Q9H205"/>
<dbReference type="ProteomicsDB" id="80466"/>
<dbReference type="Antibodypedia" id="78188">
    <property type="antibodies" value="17 antibodies from 9 providers"/>
</dbReference>
<dbReference type="DNASU" id="144125"/>
<dbReference type="Ensembl" id="ENST00000641258.1">
    <property type="protein sequence ID" value="ENSP00000493074.1"/>
    <property type="gene ID" value="ENSG00000279486.6"/>
</dbReference>
<dbReference type="GeneID" id="144125"/>
<dbReference type="KEGG" id="hsa:144125"/>
<dbReference type="MANE-Select" id="ENST00000641258.1">
    <property type="protein sequence ID" value="ENSP00000493074.1"/>
    <property type="RefSeq nucleotide sequence ID" value="NM_001004489.3"/>
    <property type="RefSeq protein sequence ID" value="NP_001004489.1"/>
</dbReference>
<dbReference type="UCSC" id="uc001mer.2">
    <property type="organism name" value="human"/>
</dbReference>
<dbReference type="AGR" id="HGNC:15142"/>
<dbReference type="CTD" id="144125"/>
<dbReference type="DisGeNET" id="144125"/>
<dbReference type="GeneCards" id="OR2AG1"/>
<dbReference type="HGNC" id="HGNC:15142">
    <property type="gene designation" value="OR2AG1"/>
</dbReference>
<dbReference type="HPA" id="ENSG00000279486">
    <property type="expression patterns" value="Not detected"/>
</dbReference>
<dbReference type="neXtProt" id="NX_Q9H205"/>
<dbReference type="OpenTargets" id="ENSG00000279486"/>
<dbReference type="PharmGKB" id="PA32126"/>
<dbReference type="VEuPathDB" id="HostDB:ENSG00000279486"/>
<dbReference type="eggNOG" id="ENOG502SIEP">
    <property type="taxonomic scope" value="Eukaryota"/>
</dbReference>
<dbReference type="GeneTree" id="ENSGT01130000278264"/>
<dbReference type="HOGENOM" id="CLU_012526_0_1_1"/>
<dbReference type="InParanoid" id="Q9H205"/>
<dbReference type="OMA" id="YELFVYV"/>
<dbReference type="OrthoDB" id="9482363at2759"/>
<dbReference type="PAN-GO" id="Q9H205">
    <property type="GO annotations" value="0 GO annotations based on evolutionary models"/>
</dbReference>
<dbReference type="PhylomeDB" id="Q9H205"/>
<dbReference type="TreeFam" id="TF337295"/>
<dbReference type="PathwayCommons" id="Q9H205"/>
<dbReference type="Reactome" id="R-HSA-9752946">
    <property type="pathway name" value="Expression and translocation of olfactory receptors"/>
</dbReference>
<dbReference type="SignaLink" id="Q9H205"/>
<dbReference type="BioGRID-ORCS" id="144125">
    <property type="hits" value="4 hits in 734 CRISPR screens"/>
</dbReference>
<dbReference type="GeneWiki" id="OR2AG1"/>
<dbReference type="GenomeRNAi" id="144125"/>
<dbReference type="Pharos" id="Q9H205">
    <property type="development level" value="Tdark"/>
</dbReference>
<dbReference type="PRO" id="PR:Q9H205"/>
<dbReference type="Proteomes" id="UP000005640">
    <property type="component" value="Chromosome 11"/>
</dbReference>
<dbReference type="RNAct" id="Q9H205">
    <property type="molecule type" value="protein"/>
</dbReference>
<dbReference type="Bgee" id="ENSG00000279486">
    <property type="expression patterns" value="Expressed in bone marrow cell and 5 other cell types or tissues"/>
</dbReference>
<dbReference type="ExpressionAtlas" id="Q9H205">
    <property type="expression patterns" value="baseline and differential"/>
</dbReference>
<dbReference type="GO" id="GO:0005886">
    <property type="term" value="C:plasma membrane"/>
    <property type="evidence" value="ECO:0000318"/>
    <property type="project" value="GO_Central"/>
</dbReference>
<dbReference type="GO" id="GO:0004930">
    <property type="term" value="F:G protein-coupled receptor activity"/>
    <property type="evidence" value="ECO:0007669"/>
    <property type="project" value="UniProtKB-KW"/>
</dbReference>
<dbReference type="GO" id="GO:0004984">
    <property type="term" value="F:olfactory receptor activity"/>
    <property type="evidence" value="ECO:0000318"/>
    <property type="project" value="GO_Central"/>
</dbReference>
<dbReference type="GO" id="GO:0050911">
    <property type="term" value="P:detection of chemical stimulus involved in sensory perception of smell"/>
    <property type="evidence" value="ECO:0000318"/>
    <property type="project" value="GO_Central"/>
</dbReference>
<dbReference type="CDD" id="cd15421">
    <property type="entry name" value="7tmA_OR2T-like"/>
    <property type="match status" value="1"/>
</dbReference>
<dbReference type="FunFam" id="1.20.1070.10:FF:000008">
    <property type="entry name" value="Olfactory receptor"/>
    <property type="match status" value="1"/>
</dbReference>
<dbReference type="Gene3D" id="1.20.1070.10">
    <property type="entry name" value="Rhodopsin 7-helix transmembrane proteins"/>
    <property type="match status" value="1"/>
</dbReference>
<dbReference type="InterPro" id="IPR000276">
    <property type="entry name" value="GPCR_Rhodpsn"/>
</dbReference>
<dbReference type="InterPro" id="IPR017452">
    <property type="entry name" value="GPCR_Rhodpsn_7TM"/>
</dbReference>
<dbReference type="InterPro" id="IPR000725">
    <property type="entry name" value="Olfact_rcpt"/>
</dbReference>
<dbReference type="PANTHER" id="PTHR26453">
    <property type="entry name" value="OLFACTORY RECEPTOR"/>
    <property type="match status" value="1"/>
</dbReference>
<dbReference type="Pfam" id="PF13853">
    <property type="entry name" value="7tm_4"/>
    <property type="match status" value="1"/>
</dbReference>
<dbReference type="PRINTS" id="PR00237">
    <property type="entry name" value="GPCRRHODOPSN"/>
</dbReference>
<dbReference type="PRINTS" id="PR00245">
    <property type="entry name" value="OLFACTORYR"/>
</dbReference>
<dbReference type="SUPFAM" id="SSF81321">
    <property type="entry name" value="Family A G protein-coupled receptor-like"/>
    <property type="match status" value="1"/>
</dbReference>
<dbReference type="PROSITE" id="PS50262">
    <property type="entry name" value="G_PROTEIN_RECEP_F1_2"/>
    <property type="match status" value="1"/>
</dbReference>
<protein>
    <recommendedName>
        <fullName>Olfactory receptor 2AG1</fullName>
    </recommendedName>
    <alternativeName>
        <fullName>HT3</fullName>
    </alternativeName>
    <alternativeName>
        <fullName>Olfactory receptor 2AG3</fullName>
    </alternativeName>
    <alternativeName>
        <fullName>Olfactory receptor OR11-79</fullName>
    </alternativeName>
</protein>
<sequence>MELWNFTLGSGFILVGILNDSGSPELLCATITILYLLALISNGLLLLAITMEARLHMPMYLLLGQLSLMDLLFTSVVTPKALADFLRRENTISFGGCALQMFLALTMGGAEDLLLAFMAYDRYVAICHPLTYMTLMSSRACWLMVATSWILASLSALIYTVYTMHYPFCRAQEIRHLLCEIPHLLKVACADTSRYELMVYVMGVTFLIPSLAAILASYTQILLTVLHMPSNEGRKKALVTCSSHLTVVGMFYGAATFMYVLPSSFHSTRQDNIISVFYTIVTPALNPLIYSLRNKEVMRALRRVLGKYMLPAHSTL</sequence>
<accession>Q9H205</accession>
<accession>B9EKV7</accession>
<accession>Q6IFG7</accession>
<accession>Q96R26</accession>
<reference key="1">
    <citation type="submission" date="2001-07" db="EMBL/GenBank/DDBJ databases">
        <title>Genome-wide discovery and analysis of human seven transmembrane helix receptor genes.</title>
        <authorList>
            <person name="Suwa M."/>
            <person name="Sato T."/>
            <person name="Okouchi I."/>
            <person name="Arita M."/>
            <person name="Futami K."/>
            <person name="Matsumoto S."/>
            <person name="Tsutsumi S."/>
            <person name="Aburatani H."/>
            <person name="Asai K."/>
            <person name="Akiyama Y."/>
        </authorList>
    </citation>
    <scope>NUCLEOTIDE SEQUENCE [GENOMIC DNA]</scope>
</reference>
<reference key="2">
    <citation type="submission" date="2005-09" db="EMBL/GenBank/DDBJ databases">
        <authorList>
            <person name="Mural R.J."/>
            <person name="Istrail S."/>
            <person name="Sutton G.G."/>
            <person name="Florea L."/>
            <person name="Halpern A.L."/>
            <person name="Mobarry C.M."/>
            <person name="Lippert R."/>
            <person name="Walenz B."/>
            <person name="Shatkay H."/>
            <person name="Dew I."/>
            <person name="Miller J.R."/>
            <person name="Flanigan M.J."/>
            <person name="Edwards N.J."/>
            <person name="Bolanos R."/>
            <person name="Fasulo D."/>
            <person name="Halldorsson B.V."/>
            <person name="Hannenhalli S."/>
            <person name="Turner R."/>
            <person name="Yooseph S."/>
            <person name="Lu F."/>
            <person name="Nusskern D.R."/>
            <person name="Shue B.C."/>
            <person name="Zheng X.H."/>
            <person name="Zhong F."/>
            <person name="Delcher A.L."/>
            <person name="Huson D.H."/>
            <person name="Kravitz S.A."/>
            <person name="Mouchard L."/>
            <person name="Reinert K."/>
            <person name="Remington K.A."/>
            <person name="Clark A.G."/>
            <person name="Waterman M.S."/>
            <person name="Eichler E.E."/>
            <person name="Adams M.D."/>
            <person name="Hunkapiller M.W."/>
            <person name="Myers E.W."/>
            <person name="Venter J.C."/>
        </authorList>
    </citation>
    <scope>NUCLEOTIDE SEQUENCE [LARGE SCALE GENOMIC DNA]</scope>
</reference>
<reference key="3">
    <citation type="journal article" date="2004" name="Genome Res.">
        <title>The status, quality, and expansion of the NIH full-length cDNA project: the Mammalian Gene Collection (MGC).</title>
        <authorList>
            <consortium name="The MGC Project Team"/>
        </authorList>
    </citation>
    <scope>NUCLEOTIDE SEQUENCE [LARGE SCALE MRNA]</scope>
    <source>
        <tissue>Testis</tissue>
    </source>
</reference>
<reference key="4">
    <citation type="journal article" date="2002" name="Genomics">
        <title>DEFOG: a practical scheme for deciphering families of genes.</title>
        <authorList>
            <person name="Fuchs T."/>
            <person name="Malecova B."/>
            <person name="Linhart C."/>
            <person name="Sharan R."/>
            <person name="Khen M."/>
            <person name="Herwig R."/>
            <person name="Shmulevich D."/>
            <person name="Elkon R."/>
            <person name="Steinfath M."/>
            <person name="O'Brien J.K."/>
            <person name="Radelof U."/>
            <person name="Lehrach H."/>
            <person name="Lancet D."/>
            <person name="Shamir R."/>
        </authorList>
    </citation>
    <scope>NUCLEOTIDE SEQUENCE [GENOMIC DNA] OF 68-284</scope>
</reference>
<reference key="5">
    <citation type="journal article" date="2001" name="Proc. Natl. Acad. Sci. U.S.A.">
        <title>Genomic analysis of orthologous mouse and human olfactory receptor loci.</title>
        <authorList>
            <person name="Lane R.P."/>
            <person name="Cutforth T."/>
            <person name="Young J."/>
            <person name="Athanasiou M."/>
            <person name="Friedman C."/>
            <person name="Rowen L."/>
            <person name="Evans G."/>
            <person name="Axel R."/>
            <person name="Hood L."/>
            <person name="Trask B.J."/>
        </authorList>
    </citation>
    <scope>NUCLEOTIDE SEQUENCE [GENOMIC DNA] OF 152-316</scope>
    <scope>VARIANTS LEU-187 AND GLY-299</scope>
</reference>
<reference key="6">
    <citation type="journal article" date="2004" name="Proc. Natl. Acad. Sci. U.S.A.">
        <title>The human olfactory receptor gene family.</title>
        <authorList>
            <person name="Malnic B."/>
            <person name="Godfrey P.A."/>
            <person name="Buck L.B."/>
        </authorList>
    </citation>
    <scope>IDENTIFICATION</scope>
</reference>
<reference key="7">
    <citation type="journal article" date="2004" name="Proc. Natl. Acad. Sci. U.S.A.">
        <authorList>
            <person name="Malnic B."/>
            <person name="Godfrey P.A."/>
            <person name="Buck L.B."/>
        </authorList>
    </citation>
    <scope>ERRATUM OF PUBMED:14983052</scope>
</reference>
<comment type="function">
    <text evidence="4">Odorant receptor.</text>
</comment>
<comment type="interaction">
    <interactant intactId="EBI-7590304">
        <id>Q9H205</id>
    </interactant>
    <interactant intactId="EBI-821405">
        <id>O75970</id>
        <label>MPDZ</label>
    </interactant>
    <organismsDiffer>false</organismsDiffer>
    <experiments>8</experiments>
</comment>
<comment type="subcellular location">
    <subcellularLocation>
        <location>Cell membrane</location>
        <topology>Multi-pass membrane protein</topology>
    </subcellularLocation>
</comment>
<comment type="similarity">
    <text evidence="2">Belongs to the G-protein coupled receptor 1 family.</text>
</comment>
<comment type="online information" name="Human Olfactory Receptor Data Exploratorium (HORDE)">
    <link uri="http://genome.weizmann.ac.il/horde/card/index/symbol:OR2AG1"/>
</comment>
<name>O2AG1_HUMAN</name>